<evidence type="ECO:0000255" key="1">
    <source>
        <dbReference type="HAMAP-Rule" id="MF_00159"/>
    </source>
</evidence>
<evidence type="ECO:0000305" key="2"/>
<feature type="chain" id="PRO_0000190590" description="4-hydroxy-3-methylbut-2-en-1-yl diphosphate synthase (flavodoxin)">
    <location>
        <begin position="1"/>
        <end position="380"/>
    </location>
</feature>
<feature type="binding site" evidence="1">
    <location>
        <position position="273"/>
    </location>
    <ligand>
        <name>[4Fe-4S] cluster</name>
        <dbReference type="ChEBI" id="CHEBI:49883"/>
    </ligand>
</feature>
<feature type="binding site" evidence="1">
    <location>
        <position position="276"/>
    </location>
    <ligand>
        <name>[4Fe-4S] cluster</name>
        <dbReference type="ChEBI" id="CHEBI:49883"/>
    </ligand>
</feature>
<feature type="binding site" evidence="1">
    <location>
        <position position="308"/>
    </location>
    <ligand>
        <name>[4Fe-4S] cluster</name>
        <dbReference type="ChEBI" id="CHEBI:49883"/>
    </ligand>
</feature>
<feature type="binding site" evidence="1">
    <location>
        <position position="315"/>
    </location>
    <ligand>
        <name>[4Fe-4S] cluster</name>
        <dbReference type="ChEBI" id="CHEBI:49883"/>
    </ligand>
</feature>
<reference key="1">
    <citation type="journal article" date="2004" name="Mol. Plant Microbe Interact.">
        <title>The genome sequence of the Gram-positive sugarcane pathogen Leifsonia xyli subsp. xyli.</title>
        <authorList>
            <person name="Monteiro-Vitorello C.B."/>
            <person name="Camargo L.E.A."/>
            <person name="Van Sluys M.A."/>
            <person name="Kitajima J.P."/>
            <person name="Truffi D."/>
            <person name="do Amaral A.M."/>
            <person name="Harakava R."/>
            <person name="de Oliveira J.C.F."/>
            <person name="Wood D."/>
            <person name="de Oliveira M.C."/>
            <person name="Miyaki C.Y."/>
            <person name="Takita M.A."/>
            <person name="da Silva A.C.R."/>
            <person name="Furlan L.R."/>
            <person name="Carraro D.M."/>
            <person name="Camarotte G."/>
            <person name="Almeida N.F. Jr."/>
            <person name="Carrer H."/>
            <person name="Coutinho L.L."/>
            <person name="El-Dorry H.A."/>
            <person name="Ferro M.I.T."/>
            <person name="Gagliardi P.R."/>
            <person name="Giglioti E."/>
            <person name="Goldman M.H.S."/>
            <person name="Goldman G.H."/>
            <person name="Kimura E.T."/>
            <person name="Ferro E.S."/>
            <person name="Kuramae E.E."/>
            <person name="Lemos E.G.M."/>
            <person name="Lemos M.V.F."/>
            <person name="Mauro S.M.Z."/>
            <person name="Machado M.A."/>
            <person name="Marino C.L."/>
            <person name="Menck C.F."/>
            <person name="Nunes L.R."/>
            <person name="Oliveira R.C."/>
            <person name="Pereira G.G."/>
            <person name="Siqueira W."/>
            <person name="de Souza A.A."/>
            <person name="Tsai S.M."/>
            <person name="Zanca A.S."/>
            <person name="Simpson A.J.G."/>
            <person name="Brumbley S.M."/>
            <person name="Setubal J.C."/>
        </authorList>
    </citation>
    <scope>NUCLEOTIDE SEQUENCE [LARGE SCALE GENOMIC DNA]</scope>
    <source>
        <strain>CTCB07</strain>
    </source>
</reference>
<sequence>MPKVPETLAPRRTSRQIRVGKVLVGGDAPVSVQSMTTTPTTNINATLQQIAELTACGCDIVRVAVPNRDDAEVLPIIAKKSQIPVIADIHFQPNYVYAAIDAGCAAVRVNPGNIRKFDDQVGEIARRAKAADVSLRIGVNAGSLDRRLLEKYGKPTAEALVESAVWEASLFEEHDFHDFKISVKHNDPIVMVKAYRMLAERGDWPLHLGVTEAGPAFQGTIKSATAFGILLGEGIGDTIRVSLSAPPAEEVKVGLQILQSLNLRERKLEIVSCPSCGRAQVDVYKLAEDVTSGFEGMSVPLRVAVMGCVVNGPGEAREADLGVASGNGKGQIFVKGEVIKTVPESEIVATLIAEATRIAEDMADAGAPSPSGKPTVTVGR</sequence>
<gene>
    <name evidence="1" type="primary">ispG</name>
    <name type="ordered locus">Lxx12200</name>
</gene>
<comment type="function">
    <text evidence="1">Converts 2C-methyl-D-erythritol 2,4-cyclodiphosphate (ME-2,4cPP) into 1-hydroxy-2-methyl-2-(E)-butenyl 4-diphosphate.</text>
</comment>
<comment type="catalytic activity">
    <reaction evidence="1">
        <text>(2E)-4-hydroxy-3-methylbut-2-enyl diphosphate + oxidized [flavodoxin] + H2O + 2 H(+) = 2-C-methyl-D-erythritol 2,4-cyclic diphosphate + reduced [flavodoxin]</text>
        <dbReference type="Rhea" id="RHEA:43604"/>
        <dbReference type="Rhea" id="RHEA-COMP:10622"/>
        <dbReference type="Rhea" id="RHEA-COMP:10623"/>
        <dbReference type="ChEBI" id="CHEBI:15377"/>
        <dbReference type="ChEBI" id="CHEBI:15378"/>
        <dbReference type="ChEBI" id="CHEBI:57618"/>
        <dbReference type="ChEBI" id="CHEBI:58210"/>
        <dbReference type="ChEBI" id="CHEBI:58483"/>
        <dbReference type="ChEBI" id="CHEBI:128753"/>
        <dbReference type="EC" id="1.17.7.3"/>
    </reaction>
</comment>
<comment type="cofactor">
    <cofactor evidence="1">
        <name>[4Fe-4S] cluster</name>
        <dbReference type="ChEBI" id="CHEBI:49883"/>
    </cofactor>
    <text evidence="1">Binds 1 [4Fe-4S] cluster.</text>
</comment>
<comment type="pathway">
    <text evidence="1">Isoprenoid biosynthesis; isopentenyl diphosphate biosynthesis via DXP pathway; isopentenyl diphosphate from 1-deoxy-D-xylulose 5-phosphate: step 5/6.</text>
</comment>
<comment type="similarity">
    <text evidence="1">Belongs to the IspG family.</text>
</comment>
<comment type="sequence caution" evidence="2">
    <conflict type="erroneous initiation">
        <sequence resource="EMBL-CDS" id="AAT89066"/>
    </conflict>
</comment>
<keyword id="KW-0004">4Fe-4S</keyword>
<keyword id="KW-0408">Iron</keyword>
<keyword id="KW-0411">Iron-sulfur</keyword>
<keyword id="KW-0414">Isoprene biosynthesis</keyword>
<keyword id="KW-0479">Metal-binding</keyword>
<keyword id="KW-0560">Oxidoreductase</keyword>
<keyword id="KW-1185">Reference proteome</keyword>
<name>ISPG_LEIXX</name>
<proteinExistence type="inferred from homology"/>
<organism>
    <name type="scientific">Leifsonia xyli subsp. xyli (strain CTCB07)</name>
    <dbReference type="NCBI Taxonomy" id="281090"/>
    <lineage>
        <taxon>Bacteria</taxon>
        <taxon>Bacillati</taxon>
        <taxon>Actinomycetota</taxon>
        <taxon>Actinomycetes</taxon>
        <taxon>Micrococcales</taxon>
        <taxon>Microbacteriaceae</taxon>
        <taxon>Leifsonia</taxon>
    </lineage>
</organism>
<protein>
    <recommendedName>
        <fullName evidence="1">4-hydroxy-3-methylbut-2-en-1-yl diphosphate synthase (flavodoxin)</fullName>
        <ecNumber evidence="1">1.17.7.3</ecNumber>
    </recommendedName>
    <alternativeName>
        <fullName evidence="1">1-hydroxy-2-methyl-2-(E)-butenyl 4-diphosphate synthase</fullName>
    </alternativeName>
</protein>
<accession>Q6AEX9</accession>
<dbReference type="EC" id="1.17.7.3" evidence="1"/>
<dbReference type="EMBL" id="AE016822">
    <property type="protein sequence ID" value="AAT89066.1"/>
    <property type="status" value="ALT_INIT"/>
    <property type="molecule type" value="Genomic_DNA"/>
</dbReference>
<dbReference type="RefSeq" id="WP_041767516.1">
    <property type="nucleotide sequence ID" value="NC_006087.1"/>
</dbReference>
<dbReference type="SMR" id="Q6AEX9"/>
<dbReference type="STRING" id="281090.Lxx12200"/>
<dbReference type="KEGG" id="lxx:Lxx12200"/>
<dbReference type="eggNOG" id="COG0821">
    <property type="taxonomic scope" value="Bacteria"/>
</dbReference>
<dbReference type="HOGENOM" id="CLU_042258_0_0_11"/>
<dbReference type="UniPathway" id="UPA00056">
    <property type="reaction ID" value="UER00096"/>
</dbReference>
<dbReference type="Proteomes" id="UP000001306">
    <property type="component" value="Chromosome"/>
</dbReference>
<dbReference type="GO" id="GO:0051539">
    <property type="term" value="F:4 iron, 4 sulfur cluster binding"/>
    <property type="evidence" value="ECO:0007669"/>
    <property type="project" value="UniProtKB-UniRule"/>
</dbReference>
<dbReference type="GO" id="GO:0046429">
    <property type="term" value="F:4-hydroxy-3-methylbut-2-en-1-yl diphosphate synthase activity (ferredoxin)"/>
    <property type="evidence" value="ECO:0007669"/>
    <property type="project" value="UniProtKB-UniRule"/>
</dbReference>
<dbReference type="GO" id="GO:0141197">
    <property type="term" value="F:4-hydroxy-3-methylbut-2-enyl-diphosphate synthase activity (flavodoxin)"/>
    <property type="evidence" value="ECO:0007669"/>
    <property type="project" value="UniProtKB-EC"/>
</dbReference>
<dbReference type="GO" id="GO:0005506">
    <property type="term" value="F:iron ion binding"/>
    <property type="evidence" value="ECO:0007669"/>
    <property type="project" value="InterPro"/>
</dbReference>
<dbReference type="GO" id="GO:0019288">
    <property type="term" value="P:isopentenyl diphosphate biosynthetic process, methylerythritol 4-phosphate pathway"/>
    <property type="evidence" value="ECO:0007669"/>
    <property type="project" value="UniProtKB-UniRule"/>
</dbReference>
<dbReference type="GO" id="GO:0016114">
    <property type="term" value="P:terpenoid biosynthetic process"/>
    <property type="evidence" value="ECO:0007669"/>
    <property type="project" value="InterPro"/>
</dbReference>
<dbReference type="FunFam" id="3.20.20.20:FF:000001">
    <property type="entry name" value="4-hydroxy-3-methylbut-2-en-1-yl diphosphate synthase (flavodoxin)"/>
    <property type="match status" value="1"/>
</dbReference>
<dbReference type="Gene3D" id="3.20.20.20">
    <property type="entry name" value="Dihydropteroate synthase-like"/>
    <property type="match status" value="1"/>
</dbReference>
<dbReference type="Gene3D" id="3.30.413.10">
    <property type="entry name" value="Sulfite Reductase Hemoprotein, domain 1"/>
    <property type="match status" value="1"/>
</dbReference>
<dbReference type="HAMAP" id="MF_00159">
    <property type="entry name" value="IspG"/>
    <property type="match status" value="1"/>
</dbReference>
<dbReference type="InterPro" id="IPR011005">
    <property type="entry name" value="Dihydropteroate_synth-like_sf"/>
</dbReference>
<dbReference type="InterPro" id="IPR016425">
    <property type="entry name" value="IspG_bac"/>
</dbReference>
<dbReference type="InterPro" id="IPR004588">
    <property type="entry name" value="IspG_bac-typ"/>
</dbReference>
<dbReference type="InterPro" id="IPR045854">
    <property type="entry name" value="NO2/SO3_Rdtase_4Fe4S_sf"/>
</dbReference>
<dbReference type="NCBIfam" id="TIGR00612">
    <property type="entry name" value="ispG_gcpE"/>
    <property type="match status" value="1"/>
</dbReference>
<dbReference type="NCBIfam" id="NF001540">
    <property type="entry name" value="PRK00366.1"/>
    <property type="match status" value="1"/>
</dbReference>
<dbReference type="PANTHER" id="PTHR30454">
    <property type="entry name" value="4-HYDROXY-3-METHYLBUT-2-EN-1-YL DIPHOSPHATE SYNTHASE"/>
    <property type="match status" value="1"/>
</dbReference>
<dbReference type="PANTHER" id="PTHR30454:SF0">
    <property type="entry name" value="4-HYDROXY-3-METHYLBUT-2-EN-1-YL DIPHOSPHATE SYNTHASE (FERREDOXIN), CHLOROPLASTIC"/>
    <property type="match status" value="1"/>
</dbReference>
<dbReference type="Pfam" id="PF04551">
    <property type="entry name" value="GcpE"/>
    <property type="match status" value="1"/>
</dbReference>
<dbReference type="PIRSF" id="PIRSF004640">
    <property type="entry name" value="IspG"/>
    <property type="match status" value="1"/>
</dbReference>
<dbReference type="SUPFAM" id="SSF51717">
    <property type="entry name" value="Dihydropteroate synthetase-like"/>
    <property type="match status" value="1"/>
</dbReference>
<dbReference type="SUPFAM" id="SSF56014">
    <property type="entry name" value="Nitrite and sulphite reductase 4Fe-4S domain-like"/>
    <property type="match status" value="1"/>
</dbReference>